<keyword id="KW-0511">Multifunctional enzyme</keyword>
<keyword id="KW-0596">Phosphopantetheine</keyword>
<keyword id="KW-0597">Phosphoprotein</keyword>
<keyword id="KW-1185">Reference proteome</keyword>
<keyword id="KW-0808">Transferase</keyword>
<organism>
    <name type="scientific">Aspergillus fumigatus (strain ATCC MYA-4609 / CBS 101355 / FGSC A1100 / Af293)</name>
    <name type="common">Neosartorya fumigata</name>
    <dbReference type="NCBI Taxonomy" id="330879"/>
    <lineage>
        <taxon>Eukaryota</taxon>
        <taxon>Fungi</taxon>
        <taxon>Dikarya</taxon>
        <taxon>Ascomycota</taxon>
        <taxon>Pezizomycotina</taxon>
        <taxon>Eurotiomycetes</taxon>
        <taxon>Eurotiomycetidae</taxon>
        <taxon>Eurotiales</taxon>
        <taxon>Aspergillaceae</taxon>
        <taxon>Aspergillus</taxon>
        <taxon>Aspergillus subgen. Fumigati</taxon>
    </lineage>
</organism>
<sequence length="1834" mass="201234">MASTLPSTVVCGSQTSPPSRDCLQRIQADLKDPKLKELAKAVDELPEFWSHLVEVKPVLSQVNDAPLKKLKDWAKDESVLNIPEGLPNILLAPLTVIIHLVQYLRFAHSLDANDSQEDQHHRILQSTSKGGFQGLCTGFLSAAALACSRTRSDIWCNATVALRLATCVGAYVDLDRLTYDNTDVHTCMIIHWEDNCGKDQVTEVLKGYPGVYISVELDNRSITVTAKQSQVSLLRGDLAARGAKLTRIPIYGRYHSRTHAEILQDLLEICSNDESLRFPIISAPIVPLRNNTTGGLITSAEKLHELALKCMLTEPADWYSTMSETVSSLMLQPVINEHPLILELGHVSCLPRSLTASANIRAFTPLLTLTASPNEPDASRYDYPEHSIAVIGAACKFTGAETMQQFWELIRAGGTMVGELPEGRIALDKKSLRKPPREEPLRGNFLSRAGHFDHGLFGLSQREARYMDPQQRIALQVAYHAVESSEYFRSGIKDKNVGCYVGVGGSDYDHNVCSHAPTAFSFTGTARAFVSGRISHHFGWTGPSMTIDTACSSSAVAIHQACKDIRMGECRMALAGGVNIISCPNMQQNLAAARFLSPTGGPCRPFDAFADGYCRGEGCGFVMLKKLSCAVADKDEILGVIVGSAANHCDGNDAITVPKSHSQIDLYRKALSLAAMQPKDITYVEAHGTGTSRGDPVECRSIRQVFGGERPTLHFGSVKANVGHTEAASGIAGLLKVLLMIRNQRIPPQANFTQLNSSIPPLEPDNLSITTNELEWKATFRAACVNNYGAAGNNTAVIVCEPPRLKPSAGNNHILSGYPFLITGQSGRSLKMYCTALGEWLENTDAPLSDIAFSVTRRQNRTLRRRITFAARSLKDMKNILGQQARLDQQSSPSPKPKPVVLVFAGQTGNVVYLHKDAYEGSSLLRSHIDECDKILREMGLRGLIAFLFDQQPIEDVVLLHCLFFSLQYACAAAWLDAGLPVQRVIGHSIGQFTAMCISGVTTLADTLKIVAGRARLIQQKWAKERGCMLAIEVDRQGALELARSVPGHKIEVACFNGARNHVLVGTEVAIQTLEAKTSCKTRRLKTTHGFHSELVDHWLDDYMALAQSITYATPIIPIETCSEGGSWKEFTPEMLPRHSREAVYFFDAISRVDKELGPCTWVEGGVGSKGIALVKCALGTNTSGHSFHRLQLDSSEPLASLTDTTIQMWDEGVDVQFWLYHDTEKITFDSCDVPAYQFDETEFWLLRSDQARQSDLQRGRVISDRYKPLVYLLRDEGFRGEPRKLHFGVNQYHPDFDRYLHGREVLGEVLCPVSVFVELAAKAAAICGGRECSTAATQVQVLNLEIHNPLGHAPGARVGLRLKRIGSCKWGFSVISDKDVQSICHATGVISLRQERHGKLEIGPQWSVIQRVIGYSHIQDVLDDSSAISLKEGIIYKVLEKVAEYKPCHRAIKSMTIKGTAAVAQLEMPAISRDSSEITVSDPLVMDQFALIAEVLALCRDDCKRDDVFICSGLSELVTFKSLQSGLGPWTVYTQQTPCGPRELLSDTFVFDSTSKQLIIGLLGARFVRITASSLNGIVKRANLNSQTSELSVETDAVNHPASVAYPPSNNNDTSDILSILSHLLHEITGLPPSEISASTPLMEASVDSLAATELENRIQEEFHLHRPISLYERQFNVGTLCQEIQTQRDDRLARASRTTTATRNTSFSLGRRTSSTESLPDDAEARFISKSAAVLAQLSRMLSESFNITESILPGTELRSLGLDSLVAVELEYDLQQAFGLKVDLMQLSPELTVGGLARLILASESQTSGHIASSMMDCRQTTEGKSQMYLG</sequence>
<proteinExistence type="evidence at protein level"/>
<feature type="chain" id="PRO_0000461218" description="Non-reducing polyketide synthase spyA">
    <location>
        <begin position="1"/>
        <end position="1834"/>
    </location>
</feature>
<feature type="domain" description="Starter acyltransferase (SAT)" evidence="1">
    <location>
        <begin position="91"/>
        <end position="255"/>
    </location>
</feature>
<feature type="domain" description="Ketosynthase family 3 (KS3)" evidence="3">
    <location>
        <begin position="385"/>
        <end position="801"/>
    </location>
</feature>
<feature type="domain" description="Malonyl-CoA:ACP transacylase (MAT)" evidence="1">
    <location>
        <begin position="919"/>
        <end position="1164"/>
    </location>
</feature>
<feature type="domain" description="PKS/mFAS DH" evidence="4">
    <location>
        <begin position="1269"/>
        <end position="1577"/>
    </location>
</feature>
<feature type="domain" description="Carrier 1" evidence="2">
    <location>
        <begin position="1616"/>
        <end position="1690"/>
    </location>
</feature>
<feature type="domain" description="Carrier 2" evidence="2">
    <location>
        <begin position="1731"/>
        <end position="1807"/>
    </location>
</feature>
<feature type="region of interest" description="Product template (PT) domain" evidence="1">
    <location>
        <begin position="1269"/>
        <end position="1577"/>
    </location>
</feature>
<feature type="region of interest" description="N-terminal hotdog fold" evidence="4">
    <location>
        <begin position="1269"/>
        <end position="1398"/>
    </location>
</feature>
<feature type="region of interest" description="C-terminal hotdog fold" evidence="4">
    <location>
        <begin position="1428"/>
        <end position="1577"/>
    </location>
</feature>
<feature type="region of interest" description="Disordered" evidence="5">
    <location>
        <begin position="1693"/>
        <end position="1720"/>
    </location>
</feature>
<feature type="compositionally biased region" description="Low complexity" evidence="5">
    <location>
        <begin position="1697"/>
        <end position="1710"/>
    </location>
</feature>
<feature type="active site" description="For beta-ketoacyl synthase activity" evidence="3">
    <location>
        <position position="551"/>
    </location>
</feature>
<feature type="active site" description="For beta-ketoacyl synthase activity" evidence="3">
    <location>
        <position position="687"/>
    </location>
</feature>
<feature type="active site" description="For beta-ketoacyl synthase activity" evidence="3">
    <location>
        <position position="724"/>
    </location>
</feature>
<feature type="modified residue" description="O-(pantetheine 4'-phosphoryl)serine" evidence="2">
    <location>
        <position position="1650"/>
    </location>
</feature>
<feature type="modified residue" description="O-(pantetheine 4'-phosphoryl)serine" evidence="2">
    <location>
        <position position="1767"/>
    </location>
</feature>
<gene>
    <name evidence="7" type="primary">spyA</name>
    <name type="ORF">AFUA_8G02350</name>
</gene>
<evidence type="ECO:0000255" key="1"/>
<evidence type="ECO:0000255" key="2">
    <source>
        <dbReference type="PROSITE-ProRule" id="PRU00258"/>
    </source>
</evidence>
<evidence type="ECO:0000255" key="3">
    <source>
        <dbReference type="PROSITE-ProRule" id="PRU01348"/>
    </source>
</evidence>
<evidence type="ECO:0000255" key="4">
    <source>
        <dbReference type="PROSITE-ProRule" id="PRU01363"/>
    </source>
</evidence>
<evidence type="ECO:0000256" key="5">
    <source>
        <dbReference type="SAM" id="MobiDB-lite"/>
    </source>
</evidence>
<evidence type="ECO:0000269" key="6">
    <source>
    </source>
</evidence>
<evidence type="ECO:0000303" key="7">
    <source>
    </source>
</evidence>
<evidence type="ECO:0000305" key="8">
    <source>
    </source>
</evidence>
<protein>
    <recommendedName>
        <fullName evidence="7">Non-reducing polyketide synthase spyA</fullName>
        <ecNumber evidence="6">2.3.1.-</ecNumber>
    </recommendedName>
    <alternativeName>
        <fullName evidence="7">Sartorypyrone biosynthesis cluster protein A</fullName>
    </alternativeName>
</protein>
<name>SPYA_ASPFU</name>
<dbReference type="EC" id="2.3.1.-" evidence="6"/>
<dbReference type="EMBL" id="AAHF01000014">
    <property type="protein sequence ID" value="EAL84933.1"/>
    <property type="molecule type" value="Genomic_DNA"/>
</dbReference>
<dbReference type="RefSeq" id="XP_746971.1">
    <property type="nucleotide sequence ID" value="XM_741878.1"/>
</dbReference>
<dbReference type="SMR" id="Q4WBH9"/>
<dbReference type="STRING" id="330879.Q4WBH9"/>
<dbReference type="EnsemblFungi" id="EAL84933">
    <property type="protein sequence ID" value="EAL84933"/>
    <property type="gene ID" value="AFUA_8G02350"/>
</dbReference>
<dbReference type="GeneID" id="3504344"/>
<dbReference type="KEGG" id="afm:AFUA_8G02350"/>
<dbReference type="VEuPathDB" id="FungiDB:Afu8g02350"/>
<dbReference type="eggNOG" id="KOG1202">
    <property type="taxonomic scope" value="Eukaryota"/>
</dbReference>
<dbReference type="HOGENOM" id="CLU_000022_6_3_1"/>
<dbReference type="InParanoid" id="Q4WBH9"/>
<dbReference type="OMA" id="KTTHGFH"/>
<dbReference type="OrthoDB" id="429813at2759"/>
<dbReference type="UniPathway" id="UPA00213"/>
<dbReference type="Proteomes" id="UP000002530">
    <property type="component" value="Chromosome 8"/>
</dbReference>
<dbReference type="GO" id="GO:0004315">
    <property type="term" value="F:3-oxoacyl-[acyl-carrier-protein] synthase activity"/>
    <property type="evidence" value="ECO:0007669"/>
    <property type="project" value="InterPro"/>
</dbReference>
<dbReference type="GO" id="GO:0004312">
    <property type="term" value="F:fatty acid synthase activity"/>
    <property type="evidence" value="ECO:0000318"/>
    <property type="project" value="GO_Central"/>
</dbReference>
<dbReference type="GO" id="GO:0031177">
    <property type="term" value="F:phosphopantetheine binding"/>
    <property type="evidence" value="ECO:0007669"/>
    <property type="project" value="InterPro"/>
</dbReference>
<dbReference type="GO" id="GO:0006633">
    <property type="term" value="P:fatty acid biosynthetic process"/>
    <property type="evidence" value="ECO:0000318"/>
    <property type="project" value="GO_Central"/>
</dbReference>
<dbReference type="GO" id="GO:0019748">
    <property type="term" value="P:secondary metabolic process"/>
    <property type="evidence" value="ECO:0000303"/>
    <property type="project" value="AspGD"/>
</dbReference>
<dbReference type="GO" id="GO:0044550">
    <property type="term" value="P:secondary metabolite biosynthetic process"/>
    <property type="evidence" value="ECO:0000318"/>
    <property type="project" value="GO_Central"/>
</dbReference>
<dbReference type="CDD" id="cd00833">
    <property type="entry name" value="PKS"/>
    <property type="match status" value="1"/>
</dbReference>
<dbReference type="Gene3D" id="3.30.70.3290">
    <property type="match status" value="1"/>
</dbReference>
<dbReference type="Gene3D" id="3.40.47.10">
    <property type="match status" value="1"/>
</dbReference>
<dbReference type="Gene3D" id="1.10.1200.10">
    <property type="entry name" value="ACP-like"/>
    <property type="match status" value="2"/>
</dbReference>
<dbReference type="Gene3D" id="3.40.366.10">
    <property type="entry name" value="Malonyl-Coenzyme A Acyl Carrier Protein, domain 2"/>
    <property type="match status" value="2"/>
</dbReference>
<dbReference type="Gene3D" id="3.10.129.110">
    <property type="entry name" value="Polyketide synthase dehydratase"/>
    <property type="match status" value="1"/>
</dbReference>
<dbReference type="InterPro" id="IPR001227">
    <property type="entry name" value="Ac_transferase_dom_sf"/>
</dbReference>
<dbReference type="InterPro" id="IPR036736">
    <property type="entry name" value="ACP-like_sf"/>
</dbReference>
<dbReference type="InterPro" id="IPR014043">
    <property type="entry name" value="Acyl_transferase_dom"/>
</dbReference>
<dbReference type="InterPro" id="IPR016035">
    <property type="entry name" value="Acyl_Trfase/lysoPLipase"/>
</dbReference>
<dbReference type="InterPro" id="IPR018201">
    <property type="entry name" value="Ketoacyl_synth_AS"/>
</dbReference>
<dbReference type="InterPro" id="IPR014031">
    <property type="entry name" value="Ketoacyl_synth_C"/>
</dbReference>
<dbReference type="InterPro" id="IPR014030">
    <property type="entry name" value="Ketoacyl_synth_N"/>
</dbReference>
<dbReference type="InterPro" id="IPR020841">
    <property type="entry name" value="PKS_Beta-ketoAc_synthase_dom"/>
</dbReference>
<dbReference type="InterPro" id="IPR042104">
    <property type="entry name" value="PKS_dehydratase_sf"/>
</dbReference>
<dbReference type="InterPro" id="IPR049900">
    <property type="entry name" value="PKS_mFAS_DH"/>
</dbReference>
<dbReference type="InterPro" id="IPR050091">
    <property type="entry name" value="PKS_NRPS_Biosynth_Enz"/>
</dbReference>
<dbReference type="InterPro" id="IPR020806">
    <property type="entry name" value="PKS_PP-bd"/>
</dbReference>
<dbReference type="InterPro" id="IPR009081">
    <property type="entry name" value="PP-bd_ACP"/>
</dbReference>
<dbReference type="InterPro" id="IPR032088">
    <property type="entry name" value="SAT"/>
</dbReference>
<dbReference type="InterPro" id="IPR016039">
    <property type="entry name" value="Thiolase-like"/>
</dbReference>
<dbReference type="PANTHER" id="PTHR43775">
    <property type="entry name" value="FATTY ACID SYNTHASE"/>
    <property type="match status" value="1"/>
</dbReference>
<dbReference type="PANTHER" id="PTHR43775:SF21">
    <property type="entry name" value="NON-REDUCING POLYKETIDE SYNTHASE AUSA-RELATED"/>
    <property type="match status" value="1"/>
</dbReference>
<dbReference type="Pfam" id="PF00698">
    <property type="entry name" value="Acyl_transf_1"/>
    <property type="match status" value="1"/>
</dbReference>
<dbReference type="Pfam" id="PF00109">
    <property type="entry name" value="ketoacyl-synt"/>
    <property type="match status" value="1"/>
</dbReference>
<dbReference type="Pfam" id="PF02801">
    <property type="entry name" value="Ketoacyl-synt_C"/>
    <property type="match status" value="1"/>
</dbReference>
<dbReference type="Pfam" id="PF00550">
    <property type="entry name" value="PP-binding"/>
    <property type="match status" value="2"/>
</dbReference>
<dbReference type="Pfam" id="PF16073">
    <property type="entry name" value="SAT"/>
    <property type="match status" value="1"/>
</dbReference>
<dbReference type="SMART" id="SM00827">
    <property type="entry name" value="PKS_AT"/>
    <property type="match status" value="1"/>
</dbReference>
<dbReference type="SMART" id="SM00825">
    <property type="entry name" value="PKS_KS"/>
    <property type="match status" value="1"/>
</dbReference>
<dbReference type="SMART" id="SM00823">
    <property type="entry name" value="PKS_PP"/>
    <property type="match status" value="2"/>
</dbReference>
<dbReference type="SUPFAM" id="SSF47336">
    <property type="entry name" value="ACP-like"/>
    <property type="match status" value="2"/>
</dbReference>
<dbReference type="SUPFAM" id="SSF52151">
    <property type="entry name" value="FabD/lysophospholipase-like"/>
    <property type="match status" value="1"/>
</dbReference>
<dbReference type="SUPFAM" id="SSF53901">
    <property type="entry name" value="Thiolase-like"/>
    <property type="match status" value="1"/>
</dbReference>
<dbReference type="PROSITE" id="PS50075">
    <property type="entry name" value="CARRIER"/>
    <property type="match status" value="2"/>
</dbReference>
<dbReference type="PROSITE" id="PS00606">
    <property type="entry name" value="KS3_1"/>
    <property type="match status" value="1"/>
</dbReference>
<dbReference type="PROSITE" id="PS52004">
    <property type="entry name" value="KS3_2"/>
    <property type="match status" value="1"/>
</dbReference>
<dbReference type="PROSITE" id="PS52019">
    <property type="entry name" value="PKS_MFAS_DH"/>
    <property type="match status" value="1"/>
</dbReference>
<accession>Q4WBH9</accession>
<reference key="1">
    <citation type="journal article" date="2005" name="Nature">
        <title>Genomic sequence of the pathogenic and allergenic filamentous fungus Aspergillus fumigatus.</title>
        <authorList>
            <person name="Nierman W.C."/>
            <person name="Pain A."/>
            <person name="Anderson M.J."/>
            <person name="Wortman J.R."/>
            <person name="Kim H.S."/>
            <person name="Arroyo J."/>
            <person name="Berriman M."/>
            <person name="Abe K."/>
            <person name="Archer D.B."/>
            <person name="Bermejo C."/>
            <person name="Bennett J.W."/>
            <person name="Bowyer P."/>
            <person name="Chen D."/>
            <person name="Collins M."/>
            <person name="Coulsen R."/>
            <person name="Davies R."/>
            <person name="Dyer P.S."/>
            <person name="Farman M.L."/>
            <person name="Fedorova N."/>
            <person name="Fedorova N.D."/>
            <person name="Feldblyum T.V."/>
            <person name="Fischer R."/>
            <person name="Fosker N."/>
            <person name="Fraser A."/>
            <person name="Garcia J.L."/>
            <person name="Garcia M.J."/>
            <person name="Goble A."/>
            <person name="Goldman G.H."/>
            <person name="Gomi K."/>
            <person name="Griffith-Jones S."/>
            <person name="Gwilliam R."/>
            <person name="Haas B.J."/>
            <person name="Haas H."/>
            <person name="Harris D.E."/>
            <person name="Horiuchi H."/>
            <person name="Huang J."/>
            <person name="Humphray S."/>
            <person name="Jimenez J."/>
            <person name="Keller N."/>
            <person name="Khouri H."/>
            <person name="Kitamoto K."/>
            <person name="Kobayashi T."/>
            <person name="Konzack S."/>
            <person name="Kulkarni R."/>
            <person name="Kumagai T."/>
            <person name="Lafton A."/>
            <person name="Latge J.-P."/>
            <person name="Li W."/>
            <person name="Lord A."/>
            <person name="Lu C."/>
            <person name="Majoros W.H."/>
            <person name="May G.S."/>
            <person name="Miller B.L."/>
            <person name="Mohamoud Y."/>
            <person name="Molina M."/>
            <person name="Monod M."/>
            <person name="Mouyna I."/>
            <person name="Mulligan S."/>
            <person name="Murphy L.D."/>
            <person name="O'Neil S."/>
            <person name="Paulsen I."/>
            <person name="Penalva M.A."/>
            <person name="Pertea M."/>
            <person name="Price C."/>
            <person name="Pritchard B.L."/>
            <person name="Quail M.A."/>
            <person name="Rabbinowitsch E."/>
            <person name="Rawlins N."/>
            <person name="Rajandream M.A."/>
            <person name="Reichard U."/>
            <person name="Renauld H."/>
            <person name="Robson G.D."/>
            <person name="Rodriguez de Cordoba S."/>
            <person name="Rodriguez-Pena J.M."/>
            <person name="Ronning C.M."/>
            <person name="Rutter S."/>
            <person name="Salzberg S.L."/>
            <person name="Sanchez M."/>
            <person name="Sanchez-Ferrero J.C."/>
            <person name="Saunders D."/>
            <person name="Seeger K."/>
            <person name="Squares R."/>
            <person name="Squares S."/>
            <person name="Takeuchi M."/>
            <person name="Tekaia F."/>
            <person name="Turner G."/>
            <person name="Vazquez de Aldana C.R."/>
            <person name="Weidman J."/>
            <person name="White O."/>
            <person name="Woodward J.R."/>
            <person name="Yu J.-H."/>
            <person name="Fraser C.M."/>
            <person name="Galagan J.E."/>
            <person name="Asai K."/>
            <person name="Machida M."/>
            <person name="Hall N."/>
            <person name="Barrell B.G."/>
            <person name="Denning D.W."/>
        </authorList>
    </citation>
    <scope>NUCLEOTIDE SEQUENCE [LARGE SCALE GENOMIC DNA]</scope>
    <source>
        <strain>ATCC MYA-4609 / CBS 101355 / FGSC A1100 / Af293</strain>
    </source>
</reference>
<reference key="2">
    <citation type="journal article" date="2023" name="Chem. Sci.">
        <title>A heterologous expression platform in Aspergillus nidulans for the elucidation of cryptic secondary metabolism biosynthetic gene clusters: discovery of the Aspergillus fumigatus sartorypyrone biosynthetic pathway.</title>
        <authorList>
            <person name="Lin S.Y."/>
            <person name="Oakley C.E."/>
            <person name="Jenkinson C.B."/>
            <person name="Chiang Y.M."/>
            <person name="Lee C.K."/>
            <person name="Jones C.G."/>
            <person name="Seidler P.M."/>
            <person name="Nelson H.M."/>
            <person name="Todd R.B."/>
            <person name="Wang C.C.C."/>
            <person name="Oakley B.R."/>
        </authorList>
    </citation>
    <scope>FUNCTION</scope>
    <scope>DISRUPTION PHENOTYPE</scope>
    <scope>CATALYTIC ACTIVITY</scope>
    <scope>PATHWAY</scope>
</reference>
<comment type="function">
    <text evidence="6">Non-reducing polyketide synthase; part of the gene cluster that mediates the biosynthesis of meroterpenoids called sartorypyrones (PubMed:37860661). The biosynthesis of sartorypyrones begins with the production of triacetic acid lactone (TAL) by the NR-PKS spyA using one molecule of acetyl-CoA and two molecules of malonyl-CoA. As spyA lacks a thioesterase (TE) domain, TAL is likely generated through self-release from spyA by spontaneous lactonization (PubMed:37860661). After production of TAL, the prenyltransferase spyF then conjugates geranylgeranyl pyrophosphate (GGPP) to TAL to form geranylgeranyl-triacetate lactone, for which the pathway-specific geranylgeranyl pyrophosphate synthase (GGPS) spyE is required to provide GGPP. Subsequently, geranylgeranyl-triacetate lactone is epoxidized at the terminal olein by the FAD-dependent monooxygenase spyC, followed by cyclization of the terpenoid component catalyzed by the terpene cyclase spyD to produce both the bicyclic sartorypyrone F and the monocyclic sartorypyrone D. Finally, the last step of the biosynthesis involves the acetylation of the meroterpenoids sartorypyrones D and F by the acetyltransferase SpyB to produce sartorypyrones A and G, respectively (PubMed:37860661).</text>
</comment>
<comment type="catalytic activity">
    <reaction evidence="6">
        <text>2 malonyl-CoA + acetyl-CoA + 2 H(+) = triacetate lactone + 2 CO2 + 3 CoA</text>
        <dbReference type="Rhea" id="RHEA:63068"/>
        <dbReference type="ChEBI" id="CHEBI:15378"/>
        <dbReference type="ChEBI" id="CHEBI:16458"/>
        <dbReference type="ChEBI" id="CHEBI:16526"/>
        <dbReference type="ChEBI" id="CHEBI:57287"/>
        <dbReference type="ChEBI" id="CHEBI:57288"/>
        <dbReference type="ChEBI" id="CHEBI:57384"/>
    </reaction>
    <physiologicalReaction direction="left-to-right" evidence="6">
        <dbReference type="Rhea" id="RHEA:63069"/>
    </physiologicalReaction>
</comment>
<comment type="cofactor">
    <cofactor evidence="2">
        <name>pantetheine 4'-phosphate</name>
        <dbReference type="ChEBI" id="CHEBI:47942"/>
    </cofactor>
</comment>
<comment type="pathway">
    <text evidence="6">Secondary metabolite biosynthesis; terpenoid biosynthesis.</text>
</comment>
<comment type="domain">
    <text evidence="8">Multidomain protein; including a starter unit:ACP transacylase (SAT) that selects the starter unit; a ketosynthase (KS) that catalyzes repeated decarboxylative condensation to elongate the polyketide backbone; a malonyl-CoA:ACP transacylase (MAT) that selects and transfers the extender unit malonyl-CoA; a product template (PT) domain that controls the immediate cyclization regioselectivity of the reactive polyketide backbone; and 2 acyl-carrier protein (ACP) domains that serve as the tether of the growing and completed polyketide via its phosphopantetheinyl arm.</text>
</comment>
<comment type="disruption phenotype">
    <text evidence="6">Impairs the production of sartorypyrones.</text>
</comment>